<sequence length="239" mass="26124">MLHYKRILLKLSGESLAGEDGYGINAGVLDQYAEEISEARDMGAQIALVIGGGNIFRGVSQAAANMDRVQADYMGMLATVINSLAFQDALERKGVFTRLLTAISMEQIAEPFIRRRAIRHLEKGRVVIFGAGTGNPYFTTDTAASLRAIEIEADIIVKGTRVDGIYDSDPEKNANAQFFPDISYLDVFHKKLGVMDMTAITLCSENSLPIVVMNMNEKGNLSRLLRGEKVGSLVHHEGV</sequence>
<accession>Q3AQ27</accession>
<evidence type="ECO:0000255" key="1">
    <source>
        <dbReference type="HAMAP-Rule" id="MF_01220"/>
    </source>
</evidence>
<organism>
    <name type="scientific">Chlorobium chlorochromatii (strain CaD3)</name>
    <dbReference type="NCBI Taxonomy" id="340177"/>
    <lineage>
        <taxon>Bacteria</taxon>
        <taxon>Pseudomonadati</taxon>
        <taxon>Chlorobiota</taxon>
        <taxon>Chlorobiia</taxon>
        <taxon>Chlorobiales</taxon>
        <taxon>Chlorobiaceae</taxon>
        <taxon>Chlorobium/Pelodictyon group</taxon>
        <taxon>Chlorobium</taxon>
    </lineage>
</organism>
<protein>
    <recommendedName>
        <fullName evidence="1">Uridylate kinase</fullName>
        <shortName evidence="1">UK</shortName>
        <ecNumber evidence="1">2.7.4.22</ecNumber>
    </recommendedName>
    <alternativeName>
        <fullName evidence="1">Uridine monophosphate kinase</fullName>
        <shortName evidence="1">UMP kinase</shortName>
        <shortName evidence="1">UMPK</shortName>
    </alternativeName>
</protein>
<feature type="chain" id="PRO_1000053905" description="Uridylate kinase">
    <location>
        <begin position="1"/>
        <end position="239"/>
    </location>
</feature>
<feature type="region of interest" description="Involved in allosteric activation by GTP" evidence="1">
    <location>
        <begin position="18"/>
        <end position="23"/>
    </location>
</feature>
<feature type="binding site" evidence="1">
    <location>
        <begin position="10"/>
        <end position="13"/>
    </location>
    <ligand>
        <name>ATP</name>
        <dbReference type="ChEBI" id="CHEBI:30616"/>
    </ligand>
</feature>
<feature type="binding site" evidence="1">
    <location>
        <position position="52"/>
    </location>
    <ligand>
        <name>UMP</name>
        <dbReference type="ChEBI" id="CHEBI:57865"/>
    </ligand>
</feature>
<feature type="binding site" evidence="1">
    <location>
        <position position="53"/>
    </location>
    <ligand>
        <name>ATP</name>
        <dbReference type="ChEBI" id="CHEBI:30616"/>
    </ligand>
</feature>
<feature type="binding site" evidence="1">
    <location>
        <position position="57"/>
    </location>
    <ligand>
        <name>ATP</name>
        <dbReference type="ChEBI" id="CHEBI:30616"/>
    </ligand>
</feature>
<feature type="binding site" evidence="1">
    <location>
        <position position="72"/>
    </location>
    <ligand>
        <name>UMP</name>
        <dbReference type="ChEBI" id="CHEBI:57865"/>
    </ligand>
</feature>
<feature type="binding site" evidence="1">
    <location>
        <begin position="133"/>
        <end position="140"/>
    </location>
    <ligand>
        <name>UMP</name>
        <dbReference type="ChEBI" id="CHEBI:57865"/>
    </ligand>
</feature>
<feature type="binding site" evidence="1">
    <location>
        <position position="160"/>
    </location>
    <ligand>
        <name>ATP</name>
        <dbReference type="ChEBI" id="CHEBI:30616"/>
    </ligand>
</feature>
<feature type="binding site" evidence="1">
    <location>
        <position position="166"/>
    </location>
    <ligand>
        <name>ATP</name>
        <dbReference type="ChEBI" id="CHEBI:30616"/>
    </ligand>
</feature>
<feature type="binding site" evidence="1">
    <location>
        <position position="169"/>
    </location>
    <ligand>
        <name>ATP</name>
        <dbReference type="ChEBI" id="CHEBI:30616"/>
    </ligand>
</feature>
<name>PYRH_CHLCH</name>
<gene>
    <name evidence="1" type="primary">pyrH</name>
    <name type="ordered locus">Cag_1646</name>
</gene>
<dbReference type="EC" id="2.7.4.22" evidence="1"/>
<dbReference type="EMBL" id="CP000108">
    <property type="protein sequence ID" value="ABB28898.1"/>
    <property type="molecule type" value="Genomic_DNA"/>
</dbReference>
<dbReference type="SMR" id="Q3AQ27"/>
<dbReference type="STRING" id="340177.Cag_1646"/>
<dbReference type="KEGG" id="cch:Cag_1646"/>
<dbReference type="eggNOG" id="COG0528">
    <property type="taxonomic scope" value="Bacteria"/>
</dbReference>
<dbReference type="HOGENOM" id="CLU_033861_0_0_10"/>
<dbReference type="OrthoDB" id="9807458at2"/>
<dbReference type="UniPathway" id="UPA00159">
    <property type="reaction ID" value="UER00275"/>
</dbReference>
<dbReference type="GO" id="GO:0005737">
    <property type="term" value="C:cytoplasm"/>
    <property type="evidence" value="ECO:0007669"/>
    <property type="project" value="UniProtKB-SubCell"/>
</dbReference>
<dbReference type="GO" id="GO:0005524">
    <property type="term" value="F:ATP binding"/>
    <property type="evidence" value="ECO:0007669"/>
    <property type="project" value="UniProtKB-KW"/>
</dbReference>
<dbReference type="GO" id="GO:0033862">
    <property type="term" value="F:UMP kinase activity"/>
    <property type="evidence" value="ECO:0007669"/>
    <property type="project" value="UniProtKB-EC"/>
</dbReference>
<dbReference type="GO" id="GO:0044210">
    <property type="term" value="P:'de novo' CTP biosynthetic process"/>
    <property type="evidence" value="ECO:0007669"/>
    <property type="project" value="UniProtKB-UniRule"/>
</dbReference>
<dbReference type="GO" id="GO:0006225">
    <property type="term" value="P:UDP biosynthetic process"/>
    <property type="evidence" value="ECO:0007669"/>
    <property type="project" value="TreeGrafter"/>
</dbReference>
<dbReference type="CDD" id="cd04254">
    <property type="entry name" value="AAK_UMPK-PyrH-Ec"/>
    <property type="match status" value="1"/>
</dbReference>
<dbReference type="FunFam" id="3.40.1160.10:FF:000001">
    <property type="entry name" value="Uridylate kinase"/>
    <property type="match status" value="1"/>
</dbReference>
<dbReference type="Gene3D" id="3.40.1160.10">
    <property type="entry name" value="Acetylglutamate kinase-like"/>
    <property type="match status" value="1"/>
</dbReference>
<dbReference type="HAMAP" id="MF_01220_B">
    <property type="entry name" value="PyrH_B"/>
    <property type="match status" value="1"/>
</dbReference>
<dbReference type="InterPro" id="IPR036393">
    <property type="entry name" value="AceGlu_kinase-like_sf"/>
</dbReference>
<dbReference type="InterPro" id="IPR001048">
    <property type="entry name" value="Asp/Glu/Uridylate_kinase"/>
</dbReference>
<dbReference type="InterPro" id="IPR011817">
    <property type="entry name" value="Uridylate_kinase"/>
</dbReference>
<dbReference type="InterPro" id="IPR015963">
    <property type="entry name" value="Uridylate_kinase_bac"/>
</dbReference>
<dbReference type="NCBIfam" id="TIGR02075">
    <property type="entry name" value="pyrH_bact"/>
    <property type="match status" value="1"/>
</dbReference>
<dbReference type="PANTHER" id="PTHR42833">
    <property type="entry name" value="URIDYLATE KINASE"/>
    <property type="match status" value="1"/>
</dbReference>
<dbReference type="PANTHER" id="PTHR42833:SF4">
    <property type="entry name" value="URIDYLATE KINASE PUMPKIN, CHLOROPLASTIC"/>
    <property type="match status" value="1"/>
</dbReference>
<dbReference type="Pfam" id="PF00696">
    <property type="entry name" value="AA_kinase"/>
    <property type="match status" value="1"/>
</dbReference>
<dbReference type="PIRSF" id="PIRSF005650">
    <property type="entry name" value="Uridylate_kin"/>
    <property type="match status" value="1"/>
</dbReference>
<dbReference type="SUPFAM" id="SSF53633">
    <property type="entry name" value="Carbamate kinase-like"/>
    <property type="match status" value="1"/>
</dbReference>
<comment type="function">
    <text evidence="1">Catalyzes the reversible phosphorylation of UMP to UDP.</text>
</comment>
<comment type="catalytic activity">
    <reaction evidence="1">
        <text>UMP + ATP = UDP + ADP</text>
        <dbReference type="Rhea" id="RHEA:24400"/>
        <dbReference type="ChEBI" id="CHEBI:30616"/>
        <dbReference type="ChEBI" id="CHEBI:57865"/>
        <dbReference type="ChEBI" id="CHEBI:58223"/>
        <dbReference type="ChEBI" id="CHEBI:456216"/>
        <dbReference type="EC" id="2.7.4.22"/>
    </reaction>
</comment>
<comment type="activity regulation">
    <text evidence="1">Allosterically activated by GTP. Inhibited by UTP.</text>
</comment>
<comment type="pathway">
    <text evidence="1">Pyrimidine metabolism; CTP biosynthesis via de novo pathway; UDP from UMP (UMPK route): step 1/1.</text>
</comment>
<comment type="subunit">
    <text evidence="1">Homohexamer.</text>
</comment>
<comment type="subcellular location">
    <subcellularLocation>
        <location evidence="1">Cytoplasm</location>
    </subcellularLocation>
</comment>
<comment type="similarity">
    <text evidence="1">Belongs to the UMP kinase family.</text>
</comment>
<proteinExistence type="inferred from homology"/>
<reference key="1">
    <citation type="submission" date="2005-08" db="EMBL/GenBank/DDBJ databases">
        <title>Complete sequence of Chlorobium chlorochromatii CaD3.</title>
        <authorList>
            <consortium name="US DOE Joint Genome Institute"/>
            <person name="Copeland A."/>
            <person name="Lucas S."/>
            <person name="Lapidus A."/>
            <person name="Barry K."/>
            <person name="Detter J.C."/>
            <person name="Glavina T."/>
            <person name="Hammon N."/>
            <person name="Israni S."/>
            <person name="Pitluck S."/>
            <person name="Bryant D."/>
            <person name="Schmutz J."/>
            <person name="Larimer F."/>
            <person name="Land M."/>
            <person name="Kyrpides N."/>
            <person name="Ivanova N."/>
            <person name="Richardson P."/>
        </authorList>
    </citation>
    <scope>NUCLEOTIDE SEQUENCE [LARGE SCALE GENOMIC DNA]</scope>
    <source>
        <strain>CaD3</strain>
    </source>
</reference>
<keyword id="KW-0021">Allosteric enzyme</keyword>
<keyword id="KW-0067">ATP-binding</keyword>
<keyword id="KW-0963">Cytoplasm</keyword>
<keyword id="KW-0418">Kinase</keyword>
<keyword id="KW-0547">Nucleotide-binding</keyword>
<keyword id="KW-0665">Pyrimidine biosynthesis</keyword>
<keyword id="KW-0808">Transferase</keyword>